<accession>B3M6C8</accession>
<reference key="1">
    <citation type="journal article" date="2007" name="Nature">
        <title>Evolution of genes and genomes on the Drosophila phylogeny.</title>
        <authorList>
            <consortium name="Drosophila 12 genomes consortium"/>
        </authorList>
    </citation>
    <scope>NUCLEOTIDE SEQUENCE [LARGE SCALE GENOMIC DNA]</scope>
    <source>
        <strain>Tucson 14024-0371.13</strain>
    </source>
</reference>
<gene>
    <name type="ORF">GF24309</name>
</gene>
<sequence length="266" mass="30229">MMQRCVWRLQMPLALRRGLASGEAKNQGVSPEAEPLDSFERQYLKDRIEISPFQRVILGAGSSIAALLDPRRHDMIACLGETTGEGALENILDTMQASEEGQRIMAEKPRIHTSTIDFKLLESLPADSFGAAYVKFLKDNQVTPDSRMAVRFLEDPKLAYLMTRYRECHDLIHTVLGMPTNMLGEVAVKWVEALNTGLPMCYGGAVFGAVRLRPKQRRAYLKHYLPWALENGKRSKPLMPVYWEKRWEQKLQDLRAELGITVLNKV</sequence>
<evidence type="ECO:0000255" key="1">
    <source>
        <dbReference type="HAMAP-Rule" id="MF_03111"/>
    </source>
</evidence>
<comment type="function">
    <text evidence="1">Lyase that catalyzes the C1-decarboxylation of 4-hydroxy-3-methoxy-5-(all-trans-polyprenyl)benzoic acid into 2-methoxy-6-(all-trans-polyprenyl)phenol during ubiquinone biosynthesis.</text>
</comment>
<comment type="catalytic activity">
    <reaction evidence="1">
        <text>a 4-hydroxy-3-methoxy-5-(all-trans-polyprenyl)benzoate + H(+) = a 2-methoxy-6-(all-trans-polyprenyl)phenol + CO2</text>
        <dbReference type="Rhea" id="RHEA:81179"/>
        <dbReference type="Rhea" id="RHEA-COMP:9551"/>
        <dbReference type="Rhea" id="RHEA-COMP:10931"/>
        <dbReference type="ChEBI" id="CHEBI:15378"/>
        <dbReference type="ChEBI" id="CHEBI:16526"/>
        <dbReference type="ChEBI" id="CHEBI:62731"/>
        <dbReference type="ChEBI" id="CHEBI:84443"/>
        <dbReference type="EC" id="4.1.1.130"/>
    </reaction>
</comment>
<comment type="cofactor">
    <cofactor evidence="1">
        <name>Zn(2+)</name>
        <dbReference type="ChEBI" id="CHEBI:29105"/>
    </cofactor>
</comment>
<comment type="pathway">
    <text evidence="1">Cofactor biosynthesis; ubiquinone biosynthesis.</text>
</comment>
<comment type="subunit">
    <text evidence="1">Component of a multi-subunit COQ enzyme complex.</text>
</comment>
<comment type="subcellular location">
    <subcellularLocation>
        <location evidence="1">Mitochondrion inner membrane</location>
        <topology evidence="1">Peripheral membrane protein</topology>
        <orientation evidence="1">Matrix side</orientation>
    </subcellularLocation>
</comment>
<comment type="miscellaneous">
    <text evidence="1">This protein may be expected to contain an N-terminal transit peptide but none has been predicted.</text>
</comment>
<comment type="similarity">
    <text evidence="1">Belongs to the COQ4 family.</text>
</comment>
<keyword id="KW-0456">Lyase</keyword>
<keyword id="KW-0472">Membrane</keyword>
<keyword id="KW-0479">Metal-binding</keyword>
<keyword id="KW-0496">Mitochondrion</keyword>
<keyword id="KW-0999">Mitochondrion inner membrane</keyword>
<keyword id="KW-1185">Reference proteome</keyword>
<keyword id="KW-0831">Ubiquinone biosynthesis</keyword>
<keyword id="KW-0862">Zinc</keyword>
<protein>
    <recommendedName>
        <fullName evidence="1">Ubiquinone biosynthesis protein COQ4 homolog, mitochondrial</fullName>
    </recommendedName>
    <alternativeName>
        <fullName>4-hydroxy-3-methoxy-5-polyprenylbenzoate decarboxylase</fullName>
        <ecNumber evidence="1">4.1.1.130</ecNumber>
    </alternativeName>
    <alternativeName>
        <fullName evidence="1">Coenzyme Q biosynthesis protein 4 homolog</fullName>
    </alternativeName>
</protein>
<organism>
    <name type="scientific">Drosophila ananassae</name>
    <name type="common">Fruit fly</name>
    <dbReference type="NCBI Taxonomy" id="7217"/>
    <lineage>
        <taxon>Eukaryota</taxon>
        <taxon>Metazoa</taxon>
        <taxon>Ecdysozoa</taxon>
        <taxon>Arthropoda</taxon>
        <taxon>Hexapoda</taxon>
        <taxon>Insecta</taxon>
        <taxon>Pterygota</taxon>
        <taxon>Neoptera</taxon>
        <taxon>Endopterygota</taxon>
        <taxon>Diptera</taxon>
        <taxon>Brachycera</taxon>
        <taxon>Muscomorpha</taxon>
        <taxon>Ephydroidea</taxon>
        <taxon>Drosophilidae</taxon>
        <taxon>Drosophila</taxon>
        <taxon>Sophophora</taxon>
    </lineage>
</organism>
<feature type="chain" id="PRO_0000388061" description="Ubiquinone biosynthesis protein COQ4 homolog, mitochondrial">
    <location>
        <begin position="1"/>
        <end position="266"/>
    </location>
</feature>
<feature type="binding site" evidence="1">
    <location>
        <position position="169"/>
    </location>
    <ligand>
        <name>Zn(2+)</name>
        <dbReference type="ChEBI" id="CHEBI:29105"/>
    </ligand>
</feature>
<feature type="binding site" evidence="1">
    <location>
        <position position="170"/>
    </location>
    <ligand>
        <name>Zn(2+)</name>
        <dbReference type="ChEBI" id="CHEBI:29105"/>
    </ligand>
</feature>
<feature type="binding site" evidence="1">
    <location>
        <position position="173"/>
    </location>
    <ligand>
        <name>Zn(2+)</name>
        <dbReference type="ChEBI" id="CHEBI:29105"/>
    </ligand>
</feature>
<feature type="binding site" evidence="1">
    <location>
        <position position="185"/>
    </location>
    <ligand>
        <name>Zn(2+)</name>
        <dbReference type="ChEBI" id="CHEBI:29105"/>
    </ligand>
</feature>
<dbReference type="EC" id="4.1.1.130" evidence="1"/>
<dbReference type="EMBL" id="CH902618">
    <property type="protein sequence ID" value="EDV39748.1"/>
    <property type="molecule type" value="Genomic_DNA"/>
</dbReference>
<dbReference type="SMR" id="B3M6C8"/>
<dbReference type="FunCoup" id="B3M6C8">
    <property type="interactions" value="722"/>
</dbReference>
<dbReference type="STRING" id="7217.B3M6C8"/>
<dbReference type="EnsemblMetazoa" id="FBtr0129009">
    <property type="protein sequence ID" value="FBpp0127501"/>
    <property type="gene ID" value="FBgn0101303"/>
</dbReference>
<dbReference type="EnsemblMetazoa" id="FBtr0391179">
    <property type="protein sequence ID" value="FBpp0350650"/>
    <property type="gene ID" value="FBgn0101303"/>
</dbReference>
<dbReference type="EnsemblMetazoa" id="XM_001956906.4">
    <property type="protein sequence ID" value="XP_001956942.1"/>
    <property type="gene ID" value="LOC6506942"/>
</dbReference>
<dbReference type="EnsemblMetazoa" id="XM_014909495.3">
    <property type="protein sequence ID" value="XP_014764981.1"/>
    <property type="gene ID" value="LOC6506942"/>
</dbReference>
<dbReference type="GeneID" id="6506942"/>
<dbReference type="KEGG" id="dan:6506942"/>
<dbReference type="eggNOG" id="KOG3244">
    <property type="taxonomic scope" value="Eukaryota"/>
</dbReference>
<dbReference type="HOGENOM" id="CLU_061241_1_1_1"/>
<dbReference type="InParanoid" id="B3M6C8"/>
<dbReference type="OMA" id="YYERHFH"/>
<dbReference type="OrthoDB" id="4249at2759"/>
<dbReference type="PhylomeDB" id="B3M6C8"/>
<dbReference type="UniPathway" id="UPA00232"/>
<dbReference type="Proteomes" id="UP000007801">
    <property type="component" value="Unassembled WGS sequence"/>
</dbReference>
<dbReference type="GO" id="GO:0031314">
    <property type="term" value="C:extrinsic component of mitochondrial inner membrane"/>
    <property type="evidence" value="ECO:0007669"/>
    <property type="project" value="UniProtKB-UniRule"/>
</dbReference>
<dbReference type="GO" id="GO:0006744">
    <property type="term" value="P:ubiquinone biosynthetic process"/>
    <property type="evidence" value="ECO:0007669"/>
    <property type="project" value="UniProtKB-UniRule"/>
</dbReference>
<dbReference type="HAMAP" id="MF_03111">
    <property type="entry name" value="Coq4"/>
    <property type="match status" value="1"/>
</dbReference>
<dbReference type="InterPro" id="IPR007715">
    <property type="entry name" value="Coq4"/>
</dbReference>
<dbReference type="InterPro" id="IPR027540">
    <property type="entry name" value="Coq4_euk"/>
</dbReference>
<dbReference type="PANTHER" id="PTHR12922">
    <property type="entry name" value="UBIQUINONE BIOSYNTHESIS PROTEIN"/>
    <property type="match status" value="1"/>
</dbReference>
<dbReference type="PANTHER" id="PTHR12922:SF7">
    <property type="entry name" value="UBIQUINONE BIOSYNTHESIS PROTEIN COQ4 HOMOLOG, MITOCHONDRIAL"/>
    <property type="match status" value="1"/>
</dbReference>
<dbReference type="Pfam" id="PF05019">
    <property type="entry name" value="Coq4"/>
    <property type="match status" value="1"/>
</dbReference>
<proteinExistence type="inferred from homology"/>
<name>COQ4_DROAN</name>